<evidence type="ECO:0000255" key="1">
    <source>
        <dbReference type="HAMAP-Rule" id="MF_02041"/>
    </source>
</evidence>
<sequence>MSLETASTPHTTRPEPSRRFSVAPMMDWTDRHCRFFLRLLSRQTLLYTEMVTTGALLHNDAHRFLRHDASEHPLALQLGGSVPADLAACARLAEEAGYDEVNLNVGCPSDRVQNNMIGACLMAHPALVADCVKAMRDAVSTPVTVKHRIGINGRDSYAELSDFVGQVREAGCRSFTVHARIAILEGLSPKENREIPPLRYDIAAQLKRDFPDLEIVLNGGIKTLDECQAHLETFDGVMLGREAYHNPYLLAEVDQQLFGSDAPVVSRSEALAQLRPYIVAHMESGGAMHHVTRHILGLAQGFKGARRFRQLLSADIHKAAEPLAVFDQAVELLQGR</sequence>
<organism>
    <name type="scientific">Pseudomonas putida (strain ATCC 47054 / DSM 6125 / CFBP 8728 / NCIMB 11950 / KT2440)</name>
    <dbReference type="NCBI Taxonomy" id="160488"/>
    <lineage>
        <taxon>Bacteria</taxon>
        <taxon>Pseudomonadati</taxon>
        <taxon>Pseudomonadota</taxon>
        <taxon>Gammaproteobacteria</taxon>
        <taxon>Pseudomonadales</taxon>
        <taxon>Pseudomonadaceae</taxon>
        <taxon>Pseudomonas</taxon>
    </lineage>
</organism>
<proteinExistence type="inferred from homology"/>
<accession>Q88KX0</accession>
<keyword id="KW-0285">Flavoprotein</keyword>
<keyword id="KW-0288">FMN</keyword>
<keyword id="KW-0521">NADP</keyword>
<keyword id="KW-0560">Oxidoreductase</keyword>
<keyword id="KW-1185">Reference proteome</keyword>
<keyword id="KW-0694">RNA-binding</keyword>
<keyword id="KW-0819">tRNA processing</keyword>
<keyword id="KW-0820">tRNA-binding</keyword>
<name>DUSA_PSEPK</name>
<protein>
    <recommendedName>
        <fullName evidence="1">tRNA-dihydrouridine(20/20a) synthase</fullName>
        <ecNumber evidence="1">1.3.1.-</ecNumber>
        <ecNumber evidence="1">1.3.1.91</ecNumber>
    </recommendedName>
    <alternativeName>
        <fullName evidence="1">U20-specific dihydrouridine synthase</fullName>
        <shortName evidence="1">U20-specific Dus</shortName>
    </alternativeName>
    <alternativeName>
        <fullName evidence="1">tRNA-dihydrouridine synthase A</fullName>
    </alternativeName>
</protein>
<feature type="chain" id="PRO_0000162070" description="tRNA-dihydrouridine(20/20a) synthase">
    <location>
        <begin position="1"/>
        <end position="336"/>
    </location>
</feature>
<feature type="active site" description="Proton donor" evidence="1">
    <location>
        <position position="107"/>
    </location>
</feature>
<feature type="binding site" evidence="1">
    <location>
        <begin position="24"/>
        <end position="26"/>
    </location>
    <ligand>
        <name>FMN</name>
        <dbReference type="ChEBI" id="CHEBI:58210"/>
    </ligand>
</feature>
<feature type="binding site" evidence="1">
    <location>
        <position position="77"/>
    </location>
    <ligand>
        <name>FMN</name>
        <dbReference type="ChEBI" id="CHEBI:58210"/>
    </ligand>
</feature>
<feature type="binding site" evidence="1">
    <location>
        <position position="146"/>
    </location>
    <ligand>
        <name>FMN</name>
        <dbReference type="ChEBI" id="CHEBI:58210"/>
    </ligand>
</feature>
<feature type="binding site" evidence="1">
    <location>
        <position position="178"/>
    </location>
    <ligand>
        <name>FMN</name>
        <dbReference type="ChEBI" id="CHEBI:58210"/>
    </ligand>
</feature>
<feature type="binding site" evidence="1">
    <location>
        <begin position="218"/>
        <end position="220"/>
    </location>
    <ligand>
        <name>FMN</name>
        <dbReference type="ChEBI" id="CHEBI:58210"/>
    </ligand>
</feature>
<feature type="binding site" evidence="1">
    <location>
        <begin position="240"/>
        <end position="241"/>
    </location>
    <ligand>
        <name>FMN</name>
        <dbReference type="ChEBI" id="CHEBI:58210"/>
    </ligand>
</feature>
<feature type="site" description="Interacts with tRNA" evidence="1">
    <location>
        <position position="104"/>
    </location>
</feature>
<feature type="site" description="Interacts with tRNA; defines subfamily-specific binding signature" evidence="1">
    <location>
        <position position="190"/>
    </location>
</feature>
<feature type="site" description="Interacts with tRNA" evidence="1">
    <location>
        <position position="193"/>
    </location>
</feature>
<feature type="site" description="Interacts with tRNA; defines subfamily-specific binding signature" evidence="1">
    <location>
        <position position="306"/>
    </location>
</feature>
<feature type="site" description="Interacts with tRNA; defines subfamily-specific binding signature" evidence="1">
    <location>
        <position position="309"/>
    </location>
</feature>
<reference key="1">
    <citation type="journal article" date="2002" name="Environ. Microbiol.">
        <title>Complete genome sequence and comparative analysis of the metabolically versatile Pseudomonas putida KT2440.</title>
        <authorList>
            <person name="Nelson K.E."/>
            <person name="Weinel C."/>
            <person name="Paulsen I.T."/>
            <person name="Dodson R.J."/>
            <person name="Hilbert H."/>
            <person name="Martins dos Santos V.A.P."/>
            <person name="Fouts D.E."/>
            <person name="Gill S.R."/>
            <person name="Pop M."/>
            <person name="Holmes M."/>
            <person name="Brinkac L.M."/>
            <person name="Beanan M.J."/>
            <person name="DeBoy R.T."/>
            <person name="Daugherty S.C."/>
            <person name="Kolonay J.F."/>
            <person name="Madupu R."/>
            <person name="Nelson W.C."/>
            <person name="White O."/>
            <person name="Peterson J.D."/>
            <person name="Khouri H.M."/>
            <person name="Hance I."/>
            <person name="Chris Lee P."/>
            <person name="Holtzapple E.K."/>
            <person name="Scanlan D."/>
            <person name="Tran K."/>
            <person name="Moazzez A."/>
            <person name="Utterback T.R."/>
            <person name="Rizzo M."/>
            <person name="Lee K."/>
            <person name="Kosack D."/>
            <person name="Moestl D."/>
            <person name="Wedler H."/>
            <person name="Lauber J."/>
            <person name="Stjepandic D."/>
            <person name="Hoheisel J."/>
            <person name="Straetz M."/>
            <person name="Heim S."/>
            <person name="Kiewitz C."/>
            <person name="Eisen J.A."/>
            <person name="Timmis K.N."/>
            <person name="Duesterhoeft A."/>
            <person name="Tuemmler B."/>
            <person name="Fraser C.M."/>
        </authorList>
    </citation>
    <scope>NUCLEOTIDE SEQUENCE [LARGE SCALE GENOMIC DNA]</scope>
    <source>
        <strain>ATCC 47054 / DSM 6125 / CFBP 8728 / NCIMB 11950 / KT2440</strain>
    </source>
</reference>
<comment type="function">
    <text evidence="1">Catalyzes the synthesis of 5,6-dihydrouridine (D), a modified base found in the D-loop of most tRNAs, via the reduction of the C5-C6 double bond in target uridines. Specifically modifies U20 and U20a in tRNAs.</text>
</comment>
<comment type="catalytic activity">
    <reaction evidence="1">
        <text>5,6-dihydrouridine(20) in tRNA + NADP(+) = uridine(20) in tRNA + NADPH + H(+)</text>
        <dbReference type="Rhea" id="RHEA:53336"/>
        <dbReference type="Rhea" id="RHEA-COMP:13533"/>
        <dbReference type="Rhea" id="RHEA-COMP:13534"/>
        <dbReference type="ChEBI" id="CHEBI:15378"/>
        <dbReference type="ChEBI" id="CHEBI:57783"/>
        <dbReference type="ChEBI" id="CHEBI:58349"/>
        <dbReference type="ChEBI" id="CHEBI:65315"/>
        <dbReference type="ChEBI" id="CHEBI:74443"/>
        <dbReference type="EC" id="1.3.1.91"/>
    </reaction>
</comment>
<comment type="catalytic activity">
    <reaction evidence="1">
        <text>5,6-dihydrouridine(20) in tRNA + NAD(+) = uridine(20) in tRNA + NADH + H(+)</text>
        <dbReference type="Rhea" id="RHEA:53340"/>
        <dbReference type="Rhea" id="RHEA-COMP:13533"/>
        <dbReference type="Rhea" id="RHEA-COMP:13534"/>
        <dbReference type="ChEBI" id="CHEBI:15378"/>
        <dbReference type="ChEBI" id="CHEBI:57540"/>
        <dbReference type="ChEBI" id="CHEBI:57945"/>
        <dbReference type="ChEBI" id="CHEBI:65315"/>
        <dbReference type="ChEBI" id="CHEBI:74443"/>
        <dbReference type="EC" id="1.3.1.91"/>
    </reaction>
</comment>
<comment type="catalytic activity">
    <reaction evidence="1">
        <text>5,6-dihydrouridine(20a) in tRNA + NADP(+) = uridine(20a) in tRNA + NADPH + H(+)</text>
        <dbReference type="Rhea" id="RHEA:53344"/>
        <dbReference type="Rhea" id="RHEA-COMP:13535"/>
        <dbReference type="Rhea" id="RHEA-COMP:13536"/>
        <dbReference type="ChEBI" id="CHEBI:15378"/>
        <dbReference type="ChEBI" id="CHEBI:57783"/>
        <dbReference type="ChEBI" id="CHEBI:58349"/>
        <dbReference type="ChEBI" id="CHEBI:65315"/>
        <dbReference type="ChEBI" id="CHEBI:74443"/>
    </reaction>
</comment>
<comment type="catalytic activity">
    <reaction evidence="1">
        <text>5,6-dihydrouridine(20a) in tRNA + NAD(+) = uridine(20a) in tRNA + NADH + H(+)</text>
        <dbReference type="Rhea" id="RHEA:53348"/>
        <dbReference type="Rhea" id="RHEA-COMP:13535"/>
        <dbReference type="Rhea" id="RHEA-COMP:13536"/>
        <dbReference type="ChEBI" id="CHEBI:15378"/>
        <dbReference type="ChEBI" id="CHEBI:57540"/>
        <dbReference type="ChEBI" id="CHEBI:57945"/>
        <dbReference type="ChEBI" id="CHEBI:65315"/>
        <dbReference type="ChEBI" id="CHEBI:74443"/>
    </reaction>
</comment>
<comment type="cofactor">
    <cofactor evidence="1">
        <name>FMN</name>
        <dbReference type="ChEBI" id="CHEBI:58210"/>
    </cofactor>
</comment>
<comment type="similarity">
    <text evidence="1">Belongs to the Dus family. DusA subfamily.</text>
</comment>
<gene>
    <name evidence="1" type="primary">dusA</name>
    <name type="ordered locus">PP_2169</name>
</gene>
<dbReference type="EC" id="1.3.1.-" evidence="1"/>
<dbReference type="EC" id="1.3.1.91" evidence="1"/>
<dbReference type="EMBL" id="AE015451">
    <property type="protein sequence ID" value="AAN67782.1"/>
    <property type="molecule type" value="Genomic_DNA"/>
</dbReference>
<dbReference type="RefSeq" id="NP_744318.1">
    <property type="nucleotide sequence ID" value="NC_002947.4"/>
</dbReference>
<dbReference type="RefSeq" id="WP_010953155.1">
    <property type="nucleotide sequence ID" value="NZ_CP169744.1"/>
</dbReference>
<dbReference type="SMR" id="Q88KX0"/>
<dbReference type="STRING" id="160488.PP_2169"/>
<dbReference type="PaxDb" id="160488-PP_2169"/>
<dbReference type="GeneID" id="83681310"/>
<dbReference type="KEGG" id="ppu:PP_2169"/>
<dbReference type="PATRIC" id="fig|160488.4.peg.2286"/>
<dbReference type="eggNOG" id="COG0042">
    <property type="taxonomic scope" value="Bacteria"/>
</dbReference>
<dbReference type="HOGENOM" id="CLU_013299_2_1_6"/>
<dbReference type="OrthoDB" id="9783413at2"/>
<dbReference type="PhylomeDB" id="Q88KX0"/>
<dbReference type="BioCyc" id="PPUT160488:G1G01-2310-MONOMER"/>
<dbReference type="Proteomes" id="UP000000556">
    <property type="component" value="Chromosome"/>
</dbReference>
<dbReference type="GO" id="GO:0050660">
    <property type="term" value="F:flavin adenine dinucleotide binding"/>
    <property type="evidence" value="ECO:0007669"/>
    <property type="project" value="InterPro"/>
</dbReference>
<dbReference type="GO" id="GO:0010181">
    <property type="term" value="F:FMN binding"/>
    <property type="evidence" value="ECO:0007669"/>
    <property type="project" value="UniProtKB-UniRule"/>
</dbReference>
<dbReference type="GO" id="GO:0000049">
    <property type="term" value="F:tRNA binding"/>
    <property type="evidence" value="ECO:0007669"/>
    <property type="project" value="UniProtKB-UniRule"/>
</dbReference>
<dbReference type="GO" id="GO:0102264">
    <property type="term" value="F:tRNA-dihydrouridine20 synthase activity"/>
    <property type="evidence" value="ECO:0007669"/>
    <property type="project" value="UniProtKB-EC"/>
</dbReference>
<dbReference type="GO" id="GO:0102266">
    <property type="term" value="F:tRNA-dihydrouridine20a synthase activity"/>
    <property type="evidence" value="ECO:0007669"/>
    <property type="project" value="RHEA"/>
</dbReference>
<dbReference type="CDD" id="cd02801">
    <property type="entry name" value="DUS_like_FMN"/>
    <property type="match status" value="1"/>
</dbReference>
<dbReference type="FunFam" id="3.20.20.70:FF:000083">
    <property type="entry name" value="tRNA-dihydrouridine(20/20a) synthase"/>
    <property type="match status" value="1"/>
</dbReference>
<dbReference type="Gene3D" id="1.20.120.1460">
    <property type="match status" value="1"/>
</dbReference>
<dbReference type="Gene3D" id="3.20.20.70">
    <property type="entry name" value="Aldolase class I"/>
    <property type="match status" value="1"/>
</dbReference>
<dbReference type="HAMAP" id="MF_02041">
    <property type="entry name" value="DusA_subfam"/>
    <property type="match status" value="1"/>
</dbReference>
<dbReference type="InterPro" id="IPR013785">
    <property type="entry name" value="Aldolase_TIM"/>
</dbReference>
<dbReference type="InterPro" id="IPR035587">
    <property type="entry name" value="DUS-like_FMN-bd"/>
</dbReference>
<dbReference type="InterPro" id="IPR001269">
    <property type="entry name" value="DUS_fam"/>
</dbReference>
<dbReference type="InterPro" id="IPR004653">
    <property type="entry name" value="DusA"/>
</dbReference>
<dbReference type="InterPro" id="IPR018517">
    <property type="entry name" value="tRNA_hU_synthase_CS"/>
</dbReference>
<dbReference type="NCBIfam" id="NF008774">
    <property type="entry name" value="PRK11815.1"/>
    <property type="match status" value="1"/>
</dbReference>
<dbReference type="NCBIfam" id="TIGR00742">
    <property type="entry name" value="yjbN"/>
    <property type="match status" value="1"/>
</dbReference>
<dbReference type="PANTHER" id="PTHR42907">
    <property type="entry name" value="FMN-LINKED OXIDOREDUCTASES SUPERFAMILY PROTEIN"/>
    <property type="match status" value="1"/>
</dbReference>
<dbReference type="PANTHER" id="PTHR42907:SF1">
    <property type="entry name" value="FMN-LINKED OXIDOREDUCTASES SUPERFAMILY PROTEIN"/>
    <property type="match status" value="1"/>
</dbReference>
<dbReference type="Pfam" id="PF01207">
    <property type="entry name" value="Dus"/>
    <property type="match status" value="1"/>
</dbReference>
<dbReference type="PIRSF" id="PIRSF006621">
    <property type="entry name" value="Dus"/>
    <property type="match status" value="1"/>
</dbReference>
<dbReference type="SUPFAM" id="SSF51395">
    <property type="entry name" value="FMN-linked oxidoreductases"/>
    <property type="match status" value="1"/>
</dbReference>
<dbReference type="PROSITE" id="PS01136">
    <property type="entry name" value="UPF0034"/>
    <property type="match status" value="1"/>
</dbReference>